<organism>
    <name type="scientific">Streptomyces coelicolor (strain ATCC BAA-471 / A3(2) / M145)</name>
    <dbReference type="NCBI Taxonomy" id="100226"/>
    <lineage>
        <taxon>Bacteria</taxon>
        <taxon>Bacillati</taxon>
        <taxon>Actinomycetota</taxon>
        <taxon>Actinomycetes</taxon>
        <taxon>Kitasatosporales</taxon>
        <taxon>Streptomycetaceae</taxon>
        <taxon>Streptomyces</taxon>
        <taxon>Streptomyces albidoflavus group</taxon>
    </lineage>
</organism>
<feature type="chain" id="PRO_0000134634" description="Orotidine 5'-phosphate decarboxylase">
    <location>
        <begin position="1"/>
        <end position="278"/>
    </location>
</feature>
<feature type="active site" description="Proton donor" evidence="1">
    <location>
        <position position="96"/>
    </location>
</feature>
<protein>
    <recommendedName>
        <fullName>Orotidine 5'-phosphate decarboxylase</fullName>
        <ecNumber>4.1.1.23</ecNumber>
    </recommendedName>
    <alternativeName>
        <fullName>OMP decarboxylase</fullName>
        <shortName>OMPDCase</shortName>
        <shortName>OMPdecase</shortName>
    </alternativeName>
</protein>
<sequence>MEPFGARLRRAMDERGPLCVGIDPHASLLAEWGLNDDVAGLERFSRTVVEAMADRVAVLKPQSAFFERFGSRGVAVLETTVQEARAAGALVVMDAKRGDIGSTMAAYAESFLHKDAPLFSDALTVSPYLGYGSLKPAVDLARESGAGLFVLALTSNPEGGEVQHAVRGDGRSVGATMLAHLAAENAGEEPLGSFGAVVGATLGDLSSYDLGINGPLLAPGIGAQGATPADLPRVFGAALRNVVPNVSRGVLRHGPDVTALRTAADRFAVEIRTAVTAS</sequence>
<proteinExistence type="inferred from homology"/>
<comment type="catalytic activity">
    <reaction>
        <text>orotidine 5'-phosphate + H(+) = UMP + CO2</text>
        <dbReference type="Rhea" id="RHEA:11596"/>
        <dbReference type="ChEBI" id="CHEBI:15378"/>
        <dbReference type="ChEBI" id="CHEBI:16526"/>
        <dbReference type="ChEBI" id="CHEBI:57538"/>
        <dbReference type="ChEBI" id="CHEBI:57865"/>
        <dbReference type="EC" id="4.1.1.23"/>
    </reaction>
</comment>
<comment type="pathway">
    <text>Pyrimidine metabolism; UMP biosynthesis via de novo pathway; UMP from orotate: step 2/2.</text>
</comment>
<comment type="similarity">
    <text evidence="2">Belongs to the OMP decarboxylase family. Type 2 subfamily.</text>
</comment>
<accession>Q9KXR8</accession>
<gene>
    <name type="primary">pyrF</name>
    <name type="ordered locus">SCO1481</name>
    <name type="ORF">SC9C5.05c</name>
</gene>
<reference key="1">
    <citation type="journal article" date="2002" name="Nature">
        <title>Complete genome sequence of the model actinomycete Streptomyces coelicolor A3(2).</title>
        <authorList>
            <person name="Bentley S.D."/>
            <person name="Chater K.F."/>
            <person name="Cerdeno-Tarraga A.-M."/>
            <person name="Challis G.L."/>
            <person name="Thomson N.R."/>
            <person name="James K.D."/>
            <person name="Harris D.E."/>
            <person name="Quail M.A."/>
            <person name="Kieser H."/>
            <person name="Harper D."/>
            <person name="Bateman A."/>
            <person name="Brown S."/>
            <person name="Chandra G."/>
            <person name="Chen C.W."/>
            <person name="Collins M."/>
            <person name="Cronin A."/>
            <person name="Fraser A."/>
            <person name="Goble A."/>
            <person name="Hidalgo J."/>
            <person name="Hornsby T."/>
            <person name="Howarth S."/>
            <person name="Huang C.-H."/>
            <person name="Kieser T."/>
            <person name="Larke L."/>
            <person name="Murphy L.D."/>
            <person name="Oliver K."/>
            <person name="O'Neil S."/>
            <person name="Rabbinowitsch E."/>
            <person name="Rajandream M.A."/>
            <person name="Rutherford K.M."/>
            <person name="Rutter S."/>
            <person name="Seeger K."/>
            <person name="Saunders D."/>
            <person name="Sharp S."/>
            <person name="Squares R."/>
            <person name="Squares S."/>
            <person name="Taylor K."/>
            <person name="Warren T."/>
            <person name="Wietzorrek A."/>
            <person name="Woodward J.R."/>
            <person name="Barrell B.G."/>
            <person name="Parkhill J."/>
            <person name="Hopwood D.A."/>
        </authorList>
    </citation>
    <scope>NUCLEOTIDE SEQUENCE [LARGE SCALE GENOMIC DNA]</scope>
    <source>
        <strain>ATCC BAA-471 / A3(2) / M145</strain>
    </source>
</reference>
<dbReference type="EC" id="4.1.1.23"/>
<dbReference type="EMBL" id="AL939109">
    <property type="protein sequence ID" value="CAB93361.1"/>
    <property type="molecule type" value="Genomic_DNA"/>
</dbReference>
<dbReference type="RefSeq" id="NP_625761.1">
    <property type="nucleotide sequence ID" value="NC_003888.3"/>
</dbReference>
<dbReference type="SMR" id="Q9KXR8"/>
<dbReference type="FunCoup" id="Q9KXR8">
    <property type="interactions" value="114"/>
</dbReference>
<dbReference type="STRING" id="100226.gene:17759067"/>
<dbReference type="PaxDb" id="100226-SCO1481"/>
<dbReference type="KEGG" id="sco:SCO1481"/>
<dbReference type="PATRIC" id="fig|100226.15.peg.1490"/>
<dbReference type="eggNOG" id="COG0284">
    <property type="taxonomic scope" value="Bacteria"/>
</dbReference>
<dbReference type="HOGENOM" id="CLU_060704_0_0_11"/>
<dbReference type="InParanoid" id="Q9KXR8"/>
<dbReference type="OrthoDB" id="9808470at2"/>
<dbReference type="PhylomeDB" id="Q9KXR8"/>
<dbReference type="UniPathway" id="UPA00070">
    <property type="reaction ID" value="UER00120"/>
</dbReference>
<dbReference type="Proteomes" id="UP000001973">
    <property type="component" value="Chromosome"/>
</dbReference>
<dbReference type="GO" id="GO:0004590">
    <property type="term" value="F:orotidine-5'-phosphate decarboxylase activity"/>
    <property type="evidence" value="ECO:0007669"/>
    <property type="project" value="UniProtKB-UniRule"/>
</dbReference>
<dbReference type="GO" id="GO:0006207">
    <property type="term" value="P:'de novo' pyrimidine nucleobase biosynthetic process"/>
    <property type="evidence" value="ECO:0007669"/>
    <property type="project" value="InterPro"/>
</dbReference>
<dbReference type="GO" id="GO:0044205">
    <property type="term" value="P:'de novo' UMP biosynthetic process"/>
    <property type="evidence" value="ECO:0007669"/>
    <property type="project" value="UniProtKB-UniRule"/>
</dbReference>
<dbReference type="CDD" id="cd04725">
    <property type="entry name" value="OMP_decarboxylase_like"/>
    <property type="match status" value="1"/>
</dbReference>
<dbReference type="Gene3D" id="3.20.20.70">
    <property type="entry name" value="Aldolase class I"/>
    <property type="match status" value="1"/>
</dbReference>
<dbReference type="HAMAP" id="MF_01215">
    <property type="entry name" value="OMPdecase_type2"/>
    <property type="match status" value="1"/>
</dbReference>
<dbReference type="InterPro" id="IPR013785">
    <property type="entry name" value="Aldolase_TIM"/>
</dbReference>
<dbReference type="InterPro" id="IPR018089">
    <property type="entry name" value="OMPdecase_AS"/>
</dbReference>
<dbReference type="InterPro" id="IPR011995">
    <property type="entry name" value="OMPdecase_type-2"/>
</dbReference>
<dbReference type="InterPro" id="IPR001754">
    <property type="entry name" value="OMPdeCOase_dom"/>
</dbReference>
<dbReference type="InterPro" id="IPR011060">
    <property type="entry name" value="RibuloseP-bd_barrel"/>
</dbReference>
<dbReference type="NCBIfam" id="TIGR02127">
    <property type="entry name" value="pyrF_sub2"/>
    <property type="match status" value="1"/>
</dbReference>
<dbReference type="PANTHER" id="PTHR43375">
    <property type="entry name" value="OROTIDINE 5'-PHOSPHATE DECARBOXYLASE"/>
    <property type="match status" value="1"/>
</dbReference>
<dbReference type="PANTHER" id="PTHR43375:SF1">
    <property type="entry name" value="OROTIDINE 5'-PHOSPHATE DECARBOXYLASE"/>
    <property type="match status" value="1"/>
</dbReference>
<dbReference type="Pfam" id="PF00215">
    <property type="entry name" value="OMPdecase"/>
    <property type="match status" value="1"/>
</dbReference>
<dbReference type="SMART" id="SM00934">
    <property type="entry name" value="OMPdecase"/>
    <property type="match status" value="1"/>
</dbReference>
<dbReference type="SUPFAM" id="SSF51366">
    <property type="entry name" value="Ribulose-phoshate binding barrel"/>
    <property type="match status" value="1"/>
</dbReference>
<dbReference type="PROSITE" id="PS00156">
    <property type="entry name" value="OMPDECASE"/>
    <property type="match status" value="1"/>
</dbReference>
<evidence type="ECO:0000250" key="1"/>
<evidence type="ECO:0000305" key="2"/>
<name>PYRF_STRCO</name>
<keyword id="KW-0210">Decarboxylase</keyword>
<keyword id="KW-0456">Lyase</keyword>
<keyword id="KW-0665">Pyrimidine biosynthesis</keyword>
<keyword id="KW-1185">Reference proteome</keyword>